<reference key="1">
    <citation type="submission" date="2007-02" db="EMBL/GenBank/DDBJ databases">
        <title>Complete sequence of chromosome 1 of Rhodobacter sphaeroides ATCC 17029.</title>
        <authorList>
            <person name="Copeland A."/>
            <person name="Lucas S."/>
            <person name="Lapidus A."/>
            <person name="Barry K."/>
            <person name="Detter J.C."/>
            <person name="Glavina del Rio T."/>
            <person name="Hammon N."/>
            <person name="Israni S."/>
            <person name="Dalin E."/>
            <person name="Tice H."/>
            <person name="Pitluck S."/>
            <person name="Kiss H."/>
            <person name="Brettin T."/>
            <person name="Bruce D."/>
            <person name="Han C."/>
            <person name="Tapia R."/>
            <person name="Gilna P."/>
            <person name="Schmutz J."/>
            <person name="Larimer F."/>
            <person name="Land M."/>
            <person name="Hauser L."/>
            <person name="Kyrpides N."/>
            <person name="Mikhailova N."/>
            <person name="Richardson P."/>
            <person name="Mackenzie C."/>
            <person name="Choudhary M."/>
            <person name="Donohue T.J."/>
            <person name="Kaplan S."/>
        </authorList>
    </citation>
    <scope>NUCLEOTIDE SEQUENCE [LARGE SCALE GENOMIC DNA]</scope>
    <source>
        <strain>ATCC 17029 / ATH 2.4.9</strain>
    </source>
</reference>
<protein>
    <recommendedName>
        <fullName evidence="1">Acetyl-coenzyme A carboxylase carboxyl transferase subunit alpha</fullName>
        <shortName evidence="1">ACCase subunit alpha</shortName>
        <shortName evidence="1">Acetyl-CoA carboxylase carboxyltransferase subunit alpha</shortName>
        <ecNumber evidence="1">2.1.3.15</ecNumber>
    </recommendedName>
</protein>
<name>ACCA_CERS1</name>
<accession>A3PGR9</accession>
<sequence length="319" mass="35370">MNYLEFEKPLSEIEGKAEELRALARGNREMDVEKEASALDKKAETLLKDLYKDLTPWRKCQVARHPDRPHCKDYIEGLFTEYTPLAGDRNFADDHAIMGGLARFNDNPVVVIGQEKGHDTKTRIERNFGMARPEGYRKAIRLMEMAHRFRLPVITLVDTPGAYPGKGAEERGQAEAIARATQKCLEIGVPLVAVVIGEGGSGGAVALATANRIAMLEHSVYSVISPEGCASILWKDAEKMREAAEALRLTAQDLHKLGVIDRIIKEPLGGAQRGRRETVDAVGKAIEMMLKELVGRKPEWLVKDRRNKFLDMGSKGLAA</sequence>
<proteinExistence type="inferred from homology"/>
<feature type="chain" id="PRO_1000062666" description="Acetyl-coenzyme A carboxylase carboxyl transferase subunit alpha">
    <location>
        <begin position="1"/>
        <end position="319"/>
    </location>
</feature>
<feature type="domain" description="CoA carboxyltransferase C-terminal" evidence="2">
    <location>
        <begin position="38"/>
        <end position="292"/>
    </location>
</feature>
<dbReference type="EC" id="2.1.3.15" evidence="1"/>
<dbReference type="EMBL" id="CP000577">
    <property type="protein sequence ID" value="ABN75535.1"/>
    <property type="molecule type" value="Genomic_DNA"/>
</dbReference>
<dbReference type="RefSeq" id="WP_002722606.1">
    <property type="nucleotide sequence ID" value="NC_009049.1"/>
</dbReference>
<dbReference type="SMR" id="A3PGR9"/>
<dbReference type="KEGG" id="rsh:Rsph17029_0419"/>
<dbReference type="HOGENOM" id="CLU_015486_0_2_5"/>
<dbReference type="UniPathway" id="UPA00655">
    <property type="reaction ID" value="UER00711"/>
</dbReference>
<dbReference type="GO" id="GO:0009317">
    <property type="term" value="C:acetyl-CoA carboxylase complex"/>
    <property type="evidence" value="ECO:0007669"/>
    <property type="project" value="InterPro"/>
</dbReference>
<dbReference type="GO" id="GO:0003989">
    <property type="term" value="F:acetyl-CoA carboxylase activity"/>
    <property type="evidence" value="ECO:0007669"/>
    <property type="project" value="InterPro"/>
</dbReference>
<dbReference type="GO" id="GO:0005524">
    <property type="term" value="F:ATP binding"/>
    <property type="evidence" value="ECO:0007669"/>
    <property type="project" value="UniProtKB-KW"/>
</dbReference>
<dbReference type="GO" id="GO:0016743">
    <property type="term" value="F:carboxyl- or carbamoyltransferase activity"/>
    <property type="evidence" value="ECO:0007669"/>
    <property type="project" value="UniProtKB-UniRule"/>
</dbReference>
<dbReference type="GO" id="GO:0006633">
    <property type="term" value="P:fatty acid biosynthetic process"/>
    <property type="evidence" value="ECO:0007669"/>
    <property type="project" value="UniProtKB-KW"/>
</dbReference>
<dbReference type="GO" id="GO:2001295">
    <property type="term" value="P:malonyl-CoA biosynthetic process"/>
    <property type="evidence" value="ECO:0007669"/>
    <property type="project" value="UniProtKB-UniRule"/>
</dbReference>
<dbReference type="Gene3D" id="3.90.226.10">
    <property type="entry name" value="2-enoyl-CoA Hydratase, Chain A, domain 1"/>
    <property type="match status" value="1"/>
</dbReference>
<dbReference type="HAMAP" id="MF_00823">
    <property type="entry name" value="AcetylCoA_CT_alpha"/>
    <property type="match status" value="1"/>
</dbReference>
<dbReference type="InterPro" id="IPR001095">
    <property type="entry name" value="Acetyl_CoA_COase_a_su"/>
</dbReference>
<dbReference type="InterPro" id="IPR029045">
    <property type="entry name" value="ClpP/crotonase-like_dom_sf"/>
</dbReference>
<dbReference type="InterPro" id="IPR011763">
    <property type="entry name" value="COA_CT_C"/>
</dbReference>
<dbReference type="NCBIfam" id="TIGR00513">
    <property type="entry name" value="accA"/>
    <property type="match status" value="1"/>
</dbReference>
<dbReference type="NCBIfam" id="NF041504">
    <property type="entry name" value="AccA_sub"/>
    <property type="match status" value="1"/>
</dbReference>
<dbReference type="NCBIfam" id="NF004344">
    <property type="entry name" value="PRK05724.1"/>
    <property type="match status" value="1"/>
</dbReference>
<dbReference type="PANTHER" id="PTHR42853">
    <property type="entry name" value="ACETYL-COENZYME A CARBOXYLASE CARBOXYL TRANSFERASE SUBUNIT ALPHA"/>
    <property type="match status" value="1"/>
</dbReference>
<dbReference type="PANTHER" id="PTHR42853:SF3">
    <property type="entry name" value="ACETYL-COENZYME A CARBOXYLASE CARBOXYL TRANSFERASE SUBUNIT ALPHA, CHLOROPLASTIC"/>
    <property type="match status" value="1"/>
</dbReference>
<dbReference type="Pfam" id="PF03255">
    <property type="entry name" value="ACCA"/>
    <property type="match status" value="1"/>
</dbReference>
<dbReference type="PRINTS" id="PR01069">
    <property type="entry name" value="ACCCTRFRASEA"/>
</dbReference>
<dbReference type="SUPFAM" id="SSF52096">
    <property type="entry name" value="ClpP/crotonase"/>
    <property type="match status" value="1"/>
</dbReference>
<dbReference type="PROSITE" id="PS50989">
    <property type="entry name" value="COA_CT_CTER"/>
    <property type="match status" value="1"/>
</dbReference>
<organism>
    <name type="scientific">Cereibacter sphaeroides (strain ATCC 17029 / ATH 2.4.9)</name>
    <name type="common">Rhodobacter sphaeroides</name>
    <dbReference type="NCBI Taxonomy" id="349101"/>
    <lineage>
        <taxon>Bacteria</taxon>
        <taxon>Pseudomonadati</taxon>
        <taxon>Pseudomonadota</taxon>
        <taxon>Alphaproteobacteria</taxon>
        <taxon>Rhodobacterales</taxon>
        <taxon>Paracoccaceae</taxon>
        <taxon>Cereibacter</taxon>
    </lineage>
</organism>
<evidence type="ECO:0000255" key="1">
    <source>
        <dbReference type="HAMAP-Rule" id="MF_00823"/>
    </source>
</evidence>
<evidence type="ECO:0000255" key="2">
    <source>
        <dbReference type="PROSITE-ProRule" id="PRU01137"/>
    </source>
</evidence>
<keyword id="KW-0067">ATP-binding</keyword>
<keyword id="KW-0963">Cytoplasm</keyword>
<keyword id="KW-0275">Fatty acid biosynthesis</keyword>
<keyword id="KW-0276">Fatty acid metabolism</keyword>
<keyword id="KW-0444">Lipid biosynthesis</keyword>
<keyword id="KW-0443">Lipid metabolism</keyword>
<keyword id="KW-0547">Nucleotide-binding</keyword>
<keyword id="KW-0808">Transferase</keyword>
<comment type="function">
    <text evidence="1">Component of the acetyl coenzyme A carboxylase (ACC) complex. First, biotin carboxylase catalyzes the carboxylation of biotin on its carrier protein (BCCP) and then the CO(2) group is transferred by the carboxyltransferase to acetyl-CoA to form malonyl-CoA.</text>
</comment>
<comment type="catalytic activity">
    <reaction evidence="1">
        <text>N(6)-carboxybiotinyl-L-lysyl-[protein] + acetyl-CoA = N(6)-biotinyl-L-lysyl-[protein] + malonyl-CoA</text>
        <dbReference type="Rhea" id="RHEA:54728"/>
        <dbReference type="Rhea" id="RHEA-COMP:10505"/>
        <dbReference type="Rhea" id="RHEA-COMP:10506"/>
        <dbReference type="ChEBI" id="CHEBI:57288"/>
        <dbReference type="ChEBI" id="CHEBI:57384"/>
        <dbReference type="ChEBI" id="CHEBI:83144"/>
        <dbReference type="ChEBI" id="CHEBI:83145"/>
        <dbReference type="EC" id="2.1.3.15"/>
    </reaction>
</comment>
<comment type="pathway">
    <text evidence="1">Lipid metabolism; malonyl-CoA biosynthesis; malonyl-CoA from acetyl-CoA: step 1/1.</text>
</comment>
<comment type="subunit">
    <text evidence="1">Acetyl-CoA carboxylase is a heterohexamer composed of biotin carboxyl carrier protein (AccB), biotin carboxylase (AccC) and two subunits each of ACCase subunit alpha (AccA) and ACCase subunit beta (AccD).</text>
</comment>
<comment type="subcellular location">
    <subcellularLocation>
        <location evidence="1">Cytoplasm</location>
    </subcellularLocation>
</comment>
<comment type="similarity">
    <text evidence="1">Belongs to the AccA family.</text>
</comment>
<gene>
    <name evidence="1" type="primary">accA</name>
    <name type="ordered locus">Rsph17029_0419</name>
</gene>